<protein>
    <recommendedName>
        <fullName evidence="1">Aspartate carbamoyltransferase catalytic subunit</fullName>
        <ecNumber evidence="1">2.1.3.2</ecNumber>
    </recommendedName>
    <alternativeName>
        <fullName evidence="1">Aspartate transcarbamylase</fullName>
        <shortName evidence="1">ATCase</shortName>
    </alternativeName>
</protein>
<name>PYRB_STAAW</name>
<accession>P65619</accession>
<accession>Q99UR8</accession>
<comment type="function">
    <text evidence="1">Catalyzes the condensation of carbamoyl phosphate and aspartate to form carbamoyl aspartate and inorganic phosphate, the committed step in the de novo pyrimidine nucleotide biosynthesis pathway.</text>
</comment>
<comment type="catalytic activity">
    <reaction evidence="1">
        <text>carbamoyl phosphate + L-aspartate = N-carbamoyl-L-aspartate + phosphate + H(+)</text>
        <dbReference type="Rhea" id="RHEA:20013"/>
        <dbReference type="ChEBI" id="CHEBI:15378"/>
        <dbReference type="ChEBI" id="CHEBI:29991"/>
        <dbReference type="ChEBI" id="CHEBI:32814"/>
        <dbReference type="ChEBI" id="CHEBI:43474"/>
        <dbReference type="ChEBI" id="CHEBI:58228"/>
        <dbReference type="EC" id="2.1.3.2"/>
    </reaction>
</comment>
<comment type="pathway">
    <text evidence="1">Pyrimidine metabolism; UMP biosynthesis via de novo pathway; (S)-dihydroorotate from bicarbonate: step 2/3.</text>
</comment>
<comment type="subunit">
    <text evidence="1">Heterododecamer (2C3:3R2) of six catalytic PyrB chains organized as two trimers (C3), and six regulatory PyrI chains organized as three dimers (R2).</text>
</comment>
<comment type="similarity">
    <text evidence="1">Belongs to the aspartate/ornithine carbamoyltransferase superfamily. ATCase family.</text>
</comment>
<dbReference type="EC" id="2.1.3.2" evidence="1"/>
<dbReference type="EMBL" id="BA000033">
    <property type="protein sequence ID" value="BAB94948.1"/>
    <property type="molecule type" value="Genomic_DNA"/>
</dbReference>
<dbReference type="RefSeq" id="WP_001016166.1">
    <property type="nucleotide sequence ID" value="NC_003923.1"/>
</dbReference>
<dbReference type="SMR" id="P65619"/>
<dbReference type="KEGG" id="sam:MW1083"/>
<dbReference type="HOGENOM" id="CLU_043846_2_1_9"/>
<dbReference type="UniPathway" id="UPA00070">
    <property type="reaction ID" value="UER00116"/>
</dbReference>
<dbReference type="GO" id="GO:0005829">
    <property type="term" value="C:cytosol"/>
    <property type="evidence" value="ECO:0007669"/>
    <property type="project" value="TreeGrafter"/>
</dbReference>
<dbReference type="GO" id="GO:0016597">
    <property type="term" value="F:amino acid binding"/>
    <property type="evidence" value="ECO:0007669"/>
    <property type="project" value="InterPro"/>
</dbReference>
<dbReference type="GO" id="GO:0004070">
    <property type="term" value="F:aspartate carbamoyltransferase activity"/>
    <property type="evidence" value="ECO:0007669"/>
    <property type="project" value="UniProtKB-UniRule"/>
</dbReference>
<dbReference type="GO" id="GO:0006207">
    <property type="term" value="P:'de novo' pyrimidine nucleobase biosynthetic process"/>
    <property type="evidence" value="ECO:0007669"/>
    <property type="project" value="InterPro"/>
</dbReference>
<dbReference type="GO" id="GO:0044205">
    <property type="term" value="P:'de novo' UMP biosynthetic process"/>
    <property type="evidence" value="ECO:0007669"/>
    <property type="project" value="UniProtKB-UniRule"/>
</dbReference>
<dbReference type="GO" id="GO:0006520">
    <property type="term" value="P:amino acid metabolic process"/>
    <property type="evidence" value="ECO:0007669"/>
    <property type="project" value="InterPro"/>
</dbReference>
<dbReference type="FunFam" id="3.40.50.1370:FF:000011">
    <property type="entry name" value="Aspartate carbamoyltransferase"/>
    <property type="match status" value="1"/>
</dbReference>
<dbReference type="Gene3D" id="3.40.50.1370">
    <property type="entry name" value="Aspartate/ornithine carbamoyltransferase"/>
    <property type="match status" value="2"/>
</dbReference>
<dbReference type="HAMAP" id="MF_00001">
    <property type="entry name" value="Asp_carb_tr"/>
    <property type="match status" value="1"/>
</dbReference>
<dbReference type="InterPro" id="IPR006132">
    <property type="entry name" value="Asp/Orn_carbamoyltranf_P-bd"/>
</dbReference>
<dbReference type="InterPro" id="IPR006130">
    <property type="entry name" value="Asp/Orn_carbamoylTrfase"/>
</dbReference>
<dbReference type="InterPro" id="IPR036901">
    <property type="entry name" value="Asp/Orn_carbamoylTrfase_sf"/>
</dbReference>
<dbReference type="InterPro" id="IPR002082">
    <property type="entry name" value="Asp_carbamoyltransf"/>
</dbReference>
<dbReference type="InterPro" id="IPR006131">
    <property type="entry name" value="Asp_carbamoyltransf_Asp/Orn-bd"/>
</dbReference>
<dbReference type="NCBIfam" id="TIGR00670">
    <property type="entry name" value="asp_carb_tr"/>
    <property type="match status" value="1"/>
</dbReference>
<dbReference type="NCBIfam" id="NF002032">
    <property type="entry name" value="PRK00856.1"/>
    <property type="match status" value="1"/>
</dbReference>
<dbReference type="PANTHER" id="PTHR45753:SF6">
    <property type="entry name" value="ASPARTATE CARBAMOYLTRANSFERASE"/>
    <property type="match status" value="1"/>
</dbReference>
<dbReference type="PANTHER" id="PTHR45753">
    <property type="entry name" value="ORNITHINE CARBAMOYLTRANSFERASE, MITOCHONDRIAL"/>
    <property type="match status" value="1"/>
</dbReference>
<dbReference type="Pfam" id="PF00185">
    <property type="entry name" value="OTCace"/>
    <property type="match status" value="1"/>
</dbReference>
<dbReference type="Pfam" id="PF02729">
    <property type="entry name" value="OTCace_N"/>
    <property type="match status" value="1"/>
</dbReference>
<dbReference type="PRINTS" id="PR00100">
    <property type="entry name" value="AOTCASE"/>
</dbReference>
<dbReference type="PRINTS" id="PR00101">
    <property type="entry name" value="ATCASE"/>
</dbReference>
<dbReference type="SUPFAM" id="SSF53671">
    <property type="entry name" value="Aspartate/ornithine carbamoyltransferase"/>
    <property type="match status" value="1"/>
</dbReference>
<dbReference type="PROSITE" id="PS00097">
    <property type="entry name" value="CARBAMOYLTRANSFERASE"/>
    <property type="match status" value="1"/>
</dbReference>
<sequence length="293" mass="33258">MNHLLSMEHLSTDQIYKLIQKASQFKSGERQLPNFEGKYVANLFFENSTRTKCSFEMAELKLGLKTISFETSTSSVSKGESLYDTCKTLESIGCDLLVIRHPFNNYYEKLANINIPIANAGDGSGQHPTQSLLDLMTIYEEYGYFEGLNVLICGDIKNSRVARSNYHSLKALGANVMFNSPNAWIDDSLEAPYVNIDDVIETVDIVMLLRIQHERHGLAEETRFAADDYHQKHGLNEVRYNKLQEHAIVMHPAPVNRGVEIQSDLVEASKSRIFKQMENGVYLRMAVIDELLK</sequence>
<gene>
    <name evidence="1" type="primary">pyrB</name>
    <name type="ordered locus">MW1083</name>
</gene>
<proteinExistence type="inferred from homology"/>
<feature type="chain" id="PRO_0000113198" description="Aspartate carbamoyltransferase catalytic subunit">
    <location>
        <begin position="1"/>
        <end position="293"/>
    </location>
</feature>
<feature type="binding site" evidence="1">
    <location>
        <position position="50"/>
    </location>
    <ligand>
        <name>carbamoyl phosphate</name>
        <dbReference type="ChEBI" id="CHEBI:58228"/>
    </ligand>
</feature>
<feature type="binding site" evidence="1">
    <location>
        <position position="51"/>
    </location>
    <ligand>
        <name>carbamoyl phosphate</name>
        <dbReference type="ChEBI" id="CHEBI:58228"/>
    </ligand>
</feature>
<feature type="binding site" evidence="1">
    <location>
        <position position="78"/>
    </location>
    <ligand>
        <name>L-aspartate</name>
        <dbReference type="ChEBI" id="CHEBI:29991"/>
    </ligand>
</feature>
<feature type="binding site" evidence="1">
    <location>
        <position position="100"/>
    </location>
    <ligand>
        <name>carbamoyl phosphate</name>
        <dbReference type="ChEBI" id="CHEBI:58228"/>
    </ligand>
</feature>
<feature type="binding site" evidence="1">
    <location>
        <position position="127"/>
    </location>
    <ligand>
        <name>carbamoyl phosphate</name>
        <dbReference type="ChEBI" id="CHEBI:58228"/>
    </ligand>
</feature>
<feature type="binding site" evidence="1">
    <location>
        <position position="130"/>
    </location>
    <ligand>
        <name>carbamoyl phosphate</name>
        <dbReference type="ChEBI" id="CHEBI:58228"/>
    </ligand>
</feature>
<feature type="binding site" evidence="1">
    <location>
        <position position="160"/>
    </location>
    <ligand>
        <name>L-aspartate</name>
        <dbReference type="ChEBI" id="CHEBI:29991"/>
    </ligand>
</feature>
<feature type="binding site" evidence="1">
    <location>
        <position position="210"/>
    </location>
    <ligand>
        <name>L-aspartate</name>
        <dbReference type="ChEBI" id="CHEBI:29991"/>
    </ligand>
</feature>
<feature type="binding site" evidence="1">
    <location>
        <position position="253"/>
    </location>
    <ligand>
        <name>carbamoyl phosphate</name>
        <dbReference type="ChEBI" id="CHEBI:58228"/>
    </ligand>
</feature>
<feature type="binding site" evidence="1">
    <location>
        <position position="254"/>
    </location>
    <ligand>
        <name>carbamoyl phosphate</name>
        <dbReference type="ChEBI" id="CHEBI:58228"/>
    </ligand>
</feature>
<evidence type="ECO:0000255" key="1">
    <source>
        <dbReference type="HAMAP-Rule" id="MF_00001"/>
    </source>
</evidence>
<reference key="1">
    <citation type="journal article" date="2002" name="Lancet">
        <title>Genome and virulence determinants of high virulence community-acquired MRSA.</title>
        <authorList>
            <person name="Baba T."/>
            <person name="Takeuchi F."/>
            <person name="Kuroda M."/>
            <person name="Yuzawa H."/>
            <person name="Aoki K."/>
            <person name="Oguchi A."/>
            <person name="Nagai Y."/>
            <person name="Iwama N."/>
            <person name="Asano K."/>
            <person name="Naimi T."/>
            <person name="Kuroda H."/>
            <person name="Cui L."/>
            <person name="Yamamoto K."/>
            <person name="Hiramatsu K."/>
        </authorList>
    </citation>
    <scope>NUCLEOTIDE SEQUENCE [LARGE SCALE GENOMIC DNA]</scope>
    <source>
        <strain>MW2</strain>
    </source>
</reference>
<keyword id="KW-0665">Pyrimidine biosynthesis</keyword>
<keyword id="KW-0808">Transferase</keyword>
<organism>
    <name type="scientific">Staphylococcus aureus (strain MW2)</name>
    <dbReference type="NCBI Taxonomy" id="196620"/>
    <lineage>
        <taxon>Bacteria</taxon>
        <taxon>Bacillati</taxon>
        <taxon>Bacillota</taxon>
        <taxon>Bacilli</taxon>
        <taxon>Bacillales</taxon>
        <taxon>Staphylococcaceae</taxon>
        <taxon>Staphylococcus</taxon>
    </lineage>
</organism>